<dbReference type="EC" id="2.3.1.31" evidence="1 2"/>
<dbReference type="EMBL" id="AP010904">
    <property type="protein sequence ID" value="BAH75060.1"/>
    <property type="molecule type" value="Genomic_DNA"/>
</dbReference>
<dbReference type="RefSeq" id="WP_015860266.1">
    <property type="nucleotide sequence ID" value="NC_012796.1"/>
</dbReference>
<dbReference type="SMR" id="C4XNQ9"/>
<dbReference type="STRING" id="573370.DMR_15680"/>
<dbReference type="ESTHER" id="desmr-metxa">
    <property type="family name" value="Homoserine_transacetylase"/>
</dbReference>
<dbReference type="KEGG" id="dma:DMR_15680"/>
<dbReference type="eggNOG" id="COG2021">
    <property type="taxonomic scope" value="Bacteria"/>
</dbReference>
<dbReference type="HOGENOM" id="CLU_028760_1_2_7"/>
<dbReference type="OrthoDB" id="9800754at2"/>
<dbReference type="UniPathway" id="UPA00051">
    <property type="reaction ID" value="UER00074"/>
</dbReference>
<dbReference type="Proteomes" id="UP000009071">
    <property type="component" value="Chromosome"/>
</dbReference>
<dbReference type="GO" id="GO:0005737">
    <property type="term" value="C:cytoplasm"/>
    <property type="evidence" value="ECO:0007669"/>
    <property type="project" value="UniProtKB-SubCell"/>
</dbReference>
<dbReference type="GO" id="GO:0004414">
    <property type="term" value="F:homoserine O-acetyltransferase activity"/>
    <property type="evidence" value="ECO:0007669"/>
    <property type="project" value="UniProtKB-UniRule"/>
</dbReference>
<dbReference type="GO" id="GO:0009092">
    <property type="term" value="P:homoserine metabolic process"/>
    <property type="evidence" value="ECO:0007669"/>
    <property type="project" value="TreeGrafter"/>
</dbReference>
<dbReference type="GO" id="GO:0009086">
    <property type="term" value="P:methionine biosynthetic process"/>
    <property type="evidence" value="ECO:0007669"/>
    <property type="project" value="UniProtKB-UniRule"/>
</dbReference>
<dbReference type="FunFam" id="1.10.1740.110:FF:000001">
    <property type="entry name" value="Homoserine O-acetyltransferase"/>
    <property type="match status" value="1"/>
</dbReference>
<dbReference type="Gene3D" id="1.10.1740.110">
    <property type="match status" value="1"/>
</dbReference>
<dbReference type="Gene3D" id="3.40.50.1820">
    <property type="entry name" value="alpha/beta hydrolase"/>
    <property type="match status" value="1"/>
</dbReference>
<dbReference type="HAMAP" id="MF_00296">
    <property type="entry name" value="MetX_acyltransf"/>
    <property type="match status" value="1"/>
</dbReference>
<dbReference type="InterPro" id="IPR000073">
    <property type="entry name" value="AB_hydrolase_1"/>
</dbReference>
<dbReference type="InterPro" id="IPR029058">
    <property type="entry name" value="AB_hydrolase_fold"/>
</dbReference>
<dbReference type="InterPro" id="IPR008220">
    <property type="entry name" value="HAT_MetX-like"/>
</dbReference>
<dbReference type="NCBIfam" id="TIGR01392">
    <property type="entry name" value="homoserO_Ac_trn"/>
    <property type="match status" value="1"/>
</dbReference>
<dbReference type="NCBIfam" id="NF001209">
    <property type="entry name" value="PRK00175.1"/>
    <property type="match status" value="1"/>
</dbReference>
<dbReference type="PANTHER" id="PTHR32268">
    <property type="entry name" value="HOMOSERINE O-ACETYLTRANSFERASE"/>
    <property type="match status" value="1"/>
</dbReference>
<dbReference type="PANTHER" id="PTHR32268:SF11">
    <property type="entry name" value="HOMOSERINE O-ACETYLTRANSFERASE"/>
    <property type="match status" value="1"/>
</dbReference>
<dbReference type="Pfam" id="PF00561">
    <property type="entry name" value="Abhydrolase_1"/>
    <property type="match status" value="1"/>
</dbReference>
<dbReference type="PIRSF" id="PIRSF000443">
    <property type="entry name" value="Homoser_Ac_trans"/>
    <property type="match status" value="1"/>
</dbReference>
<dbReference type="SUPFAM" id="SSF53474">
    <property type="entry name" value="alpha/beta-Hydrolases"/>
    <property type="match status" value="1"/>
</dbReference>
<comment type="function">
    <text evidence="1 2">Transfers an acetyl group from acetyl-CoA to L-homoserine, forming acetyl-L-homoserine.</text>
</comment>
<comment type="catalytic activity">
    <reaction evidence="1 2">
        <text>L-homoserine + acetyl-CoA = O-acetyl-L-homoserine + CoA</text>
        <dbReference type="Rhea" id="RHEA:13701"/>
        <dbReference type="ChEBI" id="CHEBI:57287"/>
        <dbReference type="ChEBI" id="CHEBI:57288"/>
        <dbReference type="ChEBI" id="CHEBI:57476"/>
        <dbReference type="ChEBI" id="CHEBI:57716"/>
        <dbReference type="EC" id="2.3.1.31"/>
    </reaction>
</comment>
<comment type="pathway">
    <text evidence="1">Amino-acid biosynthesis; L-methionine biosynthesis via de novo pathway; O-acetyl-L-homoserine from L-homoserine: step 1/1.</text>
</comment>
<comment type="subunit">
    <text evidence="1">Homodimer.</text>
</comment>
<comment type="subcellular location">
    <subcellularLocation>
        <location evidence="1">Cytoplasm</location>
    </subcellularLocation>
</comment>
<comment type="similarity">
    <text evidence="1">Belongs to the AB hydrolase superfamily. MetX family.</text>
</comment>
<name>METXA_SOLM1</name>
<feature type="chain" id="PRO_0000440280" description="Homoserine O-acetyltransferase">
    <location>
        <begin position="1"/>
        <end position="397"/>
    </location>
</feature>
<feature type="domain" description="AB hydrolase-1" evidence="1">
    <location>
        <begin position="58"/>
        <end position="368"/>
    </location>
</feature>
<feature type="active site" description="Nucleophile" evidence="1">
    <location>
        <position position="164"/>
    </location>
</feature>
<feature type="active site" evidence="1">
    <location>
        <position position="331"/>
    </location>
</feature>
<feature type="active site" evidence="1">
    <location>
        <position position="364"/>
    </location>
</feature>
<feature type="binding site" evidence="1">
    <location>
        <position position="233"/>
    </location>
    <ligand>
        <name>substrate</name>
    </ligand>
</feature>
<feature type="binding site" evidence="1">
    <location>
        <position position="365"/>
    </location>
    <ligand>
        <name>substrate</name>
    </ligand>
</feature>
<protein>
    <recommendedName>
        <fullName evidence="1">Homoserine O-acetyltransferase</fullName>
        <shortName evidence="1 3">HAT</shortName>
        <ecNumber evidence="1 2">2.3.1.31</ecNumber>
    </recommendedName>
    <alternativeName>
        <fullName evidence="1">Homoserine transacetylase</fullName>
        <shortName evidence="1">HTA</shortName>
    </alternativeName>
</protein>
<keyword id="KW-0012">Acyltransferase</keyword>
<keyword id="KW-0028">Amino-acid biosynthesis</keyword>
<keyword id="KW-0963">Cytoplasm</keyword>
<keyword id="KW-0486">Methionine biosynthesis</keyword>
<keyword id="KW-0808">Transferase</keyword>
<gene>
    <name evidence="1 3" type="primary">metXA</name>
    <name evidence="4" type="synonym">metX</name>
    <name evidence="4" type="ordered locus">DMR_15680</name>
</gene>
<evidence type="ECO:0000255" key="1">
    <source>
        <dbReference type="HAMAP-Rule" id="MF_00296"/>
    </source>
</evidence>
<evidence type="ECO:0000269" key="2">
    <source>
    </source>
</evidence>
<evidence type="ECO:0000303" key="3">
    <source>
    </source>
</evidence>
<evidence type="ECO:0000312" key="4">
    <source>
        <dbReference type="EMBL" id="BAH75060.1"/>
    </source>
</evidence>
<reference key="1">
    <citation type="journal article" date="2009" name="Genome Res.">
        <title>Whole genome sequence of Desulfovibrio magneticus strain RS-1 revealed common gene clusters in magnetotactic bacteria.</title>
        <authorList>
            <person name="Nakazawa H."/>
            <person name="Arakaki A."/>
            <person name="Narita-Yamada S."/>
            <person name="Yashiro I."/>
            <person name="Jinno K."/>
            <person name="Aoki N."/>
            <person name="Tsuruyama A."/>
            <person name="Okamura Y."/>
            <person name="Tanikawa S."/>
            <person name="Fujita N."/>
            <person name="Takeyama H."/>
            <person name="Matsunaga T."/>
        </authorList>
    </citation>
    <scope>NUCLEOTIDE SEQUENCE [LARGE SCALE GENOMIC DNA]</scope>
    <source>
        <strain>ATCC 700980 / DSM 13731 / RS-1</strain>
    </source>
</reference>
<reference key="2">
    <citation type="journal article" date="2017" name="Nat. Chem. Biol.">
        <title>Parallel evolution of non-homologous isofunctional enzymes in methionine biosynthesis.</title>
        <authorList>
            <person name="Bastard K."/>
            <person name="Perret A."/>
            <person name="Mariage A."/>
            <person name="Bessonnet T."/>
            <person name="Pinet-Turpault A."/>
            <person name="Petit J.L."/>
            <person name="Darii E."/>
            <person name="Bazire P."/>
            <person name="Vergne-Vaxelaire C."/>
            <person name="Brewee C."/>
            <person name="Debard A."/>
            <person name="Pellouin V."/>
            <person name="Besnard-Gonnet M."/>
            <person name="Artiguenave F."/>
            <person name="Medigue C."/>
            <person name="Vallenet D."/>
            <person name="Danchin A."/>
            <person name="Zaparucha A."/>
            <person name="Weissenbach J."/>
            <person name="Salanoubat M."/>
            <person name="de Berardinis V."/>
        </authorList>
    </citation>
    <scope>FUNCTION</scope>
    <scope>CATALYTIC ACTIVITY</scope>
</reference>
<proteinExistence type="evidence at protein level"/>
<accession>C4XNQ9</accession>
<organism>
    <name type="scientific">Solidesulfovibrio magneticus (strain ATCC 700980 / DSM 13731 / RS-1)</name>
    <name type="common">Desulfovibrio magneticus</name>
    <dbReference type="NCBI Taxonomy" id="573370"/>
    <lineage>
        <taxon>Bacteria</taxon>
        <taxon>Pseudomonadati</taxon>
        <taxon>Thermodesulfobacteriota</taxon>
        <taxon>Desulfovibrionia</taxon>
        <taxon>Desulfovibrionales</taxon>
        <taxon>Desulfovibrionaceae</taxon>
        <taxon>Solidesulfovibrio</taxon>
    </lineage>
</organism>
<sequence length="397" mass="43486">MSEYIEHSPSGTSVGRVEKRFFTVAEADSPLTVESGRALGPVVLAYETCGQLNERADNAVLVLHALTGDSHAAGYYEPGDAKPGWWDLMIGPGKPIDTDRYYVICSNVIGGCMGSTGPSSLDPATGQPYGLTFPVITIGDMVRAQKRLVEHLGVTKLLSVVGGSMGGMQALEWSVRYPDMVRTAVPLATTTKHSALAIAFNEVARQAIMADPNWNGGNYYDGVPPAHGLAVGRMIGHITYLSDEAMRQKFDRRLQDRCENSFVLEEPDFQVESYLRYQGQKFVDRFDANSFLYITKAADYFNLEASHGCGSAVAAFAKAKCRYLVASFSSDWLYPTYQSRSMVQAMKKNGLDVSFVELEAKWGHDAFLLPNARLSGMIARFLDRALVDAAKEDARAL</sequence>